<accession>Q04QG5</accession>
<name>RS9_LEPBJ</name>
<reference key="1">
    <citation type="journal article" date="2006" name="Proc. Natl. Acad. Sci. U.S.A.">
        <title>Genome reduction in Leptospira borgpetersenii reflects limited transmission potential.</title>
        <authorList>
            <person name="Bulach D.M."/>
            <person name="Zuerner R.L."/>
            <person name="Wilson P."/>
            <person name="Seemann T."/>
            <person name="McGrath A."/>
            <person name="Cullen P.A."/>
            <person name="Davis J."/>
            <person name="Johnson M."/>
            <person name="Kuczek E."/>
            <person name="Alt D.P."/>
            <person name="Peterson-Burch B."/>
            <person name="Coppel R.L."/>
            <person name="Rood J.I."/>
            <person name="Davies J.K."/>
            <person name="Adler B."/>
        </authorList>
    </citation>
    <scope>NUCLEOTIDE SEQUENCE [LARGE SCALE GENOMIC DNA]</scope>
    <source>
        <strain>JB197</strain>
    </source>
</reference>
<organism>
    <name type="scientific">Leptospira borgpetersenii serovar Hardjo-bovis (strain JB197)</name>
    <dbReference type="NCBI Taxonomy" id="355277"/>
    <lineage>
        <taxon>Bacteria</taxon>
        <taxon>Pseudomonadati</taxon>
        <taxon>Spirochaetota</taxon>
        <taxon>Spirochaetia</taxon>
        <taxon>Leptospirales</taxon>
        <taxon>Leptospiraceae</taxon>
        <taxon>Leptospira</taxon>
    </lineage>
</organism>
<proteinExistence type="inferred from homology"/>
<keyword id="KW-0687">Ribonucleoprotein</keyword>
<keyword id="KW-0689">Ribosomal protein</keyword>
<gene>
    <name evidence="1" type="primary">rpsI</name>
    <name type="ordered locus">LBJ_2393</name>
</gene>
<evidence type="ECO:0000255" key="1">
    <source>
        <dbReference type="HAMAP-Rule" id="MF_00532"/>
    </source>
</evidence>
<evidence type="ECO:0000305" key="2"/>
<protein>
    <recommendedName>
        <fullName evidence="1">Small ribosomal subunit protein uS9</fullName>
    </recommendedName>
    <alternativeName>
        <fullName evidence="2">30S ribosomal protein S9</fullName>
    </alternativeName>
</protein>
<comment type="similarity">
    <text evidence="1">Belongs to the universal ribosomal protein uS9 family.</text>
</comment>
<sequence>MAPAKEIWAVGRRKTSVARAKIKEGSGKITVNHKDIKDYLQNRKAIIEEAVRPLSLLNVLDKYDLNLNVSGGGITGQVGAIRHALARAICRIKPEFRPAVKKEGFLTRDPRMVERKKYGLHKARRGTQFSKR</sequence>
<feature type="chain" id="PRO_1000072519" description="Small ribosomal subunit protein uS9">
    <location>
        <begin position="1"/>
        <end position="132"/>
    </location>
</feature>
<dbReference type="EMBL" id="CP000350">
    <property type="protein sequence ID" value="ABJ76855.1"/>
    <property type="molecule type" value="Genomic_DNA"/>
</dbReference>
<dbReference type="RefSeq" id="WP_002722061.1">
    <property type="nucleotide sequence ID" value="NC_008510.1"/>
</dbReference>
<dbReference type="SMR" id="Q04QG5"/>
<dbReference type="GeneID" id="61172869"/>
<dbReference type="KEGG" id="lbj:LBJ_2393"/>
<dbReference type="HOGENOM" id="CLU_046483_2_1_12"/>
<dbReference type="Proteomes" id="UP000000656">
    <property type="component" value="Chromosome 1"/>
</dbReference>
<dbReference type="GO" id="GO:0022627">
    <property type="term" value="C:cytosolic small ribosomal subunit"/>
    <property type="evidence" value="ECO:0007669"/>
    <property type="project" value="TreeGrafter"/>
</dbReference>
<dbReference type="GO" id="GO:0003723">
    <property type="term" value="F:RNA binding"/>
    <property type="evidence" value="ECO:0007669"/>
    <property type="project" value="TreeGrafter"/>
</dbReference>
<dbReference type="GO" id="GO:0003735">
    <property type="term" value="F:structural constituent of ribosome"/>
    <property type="evidence" value="ECO:0007669"/>
    <property type="project" value="InterPro"/>
</dbReference>
<dbReference type="GO" id="GO:0006412">
    <property type="term" value="P:translation"/>
    <property type="evidence" value="ECO:0007669"/>
    <property type="project" value="UniProtKB-UniRule"/>
</dbReference>
<dbReference type="FunFam" id="3.30.230.10:FF:000001">
    <property type="entry name" value="30S ribosomal protein S9"/>
    <property type="match status" value="1"/>
</dbReference>
<dbReference type="Gene3D" id="3.30.230.10">
    <property type="match status" value="1"/>
</dbReference>
<dbReference type="HAMAP" id="MF_00532_B">
    <property type="entry name" value="Ribosomal_uS9_B"/>
    <property type="match status" value="1"/>
</dbReference>
<dbReference type="InterPro" id="IPR020568">
    <property type="entry name" value="Ribosomal_Su5_D2-typ_SF"/>
</dbReference>
<dbReference type="InterPro" id="IPR000754">
    <property type="entry name" value="Ribosomal_uS9"/>
</dbReference>
<dbReference type="InterPro" id="IPR023035">
    <property type="entry name" value="Ribosomal_uS9_bac/plastid"/>
</dbReference>
<dbReference type="InterPro" id="IPR020574">
    <property type="entry name" value="Ribosomal_uS9_CS"/>
</dbReference>
<dbReference type="InterPro" id="IPR014721">
    <property type="entry name" value="Ribsml_uS5_D2-typ_fold_subgr"/>
</dbReference>
<dbReference type="NCBIfam" id="NF001099">
    <property type="entry name" value="PRK00132.1"/>
    <property type="match status" value="1"/>
</dbReference>
<dbReference type="PANTHER" id="PTHR21569">
    <property type="entry name" value="RIBOSOMAL PROTEIN S9"/>
    <property type="match status" value="1"/>
</dbReference>
<dbReference type="PANTHER" id="PTHR21569:SF1">
    <property type="entry name" value="SMALL RIBOSOMAL SUBUNIT PROTEIN US9M"/>
    <property type="match status" value="1"/>
</dbReference>
<dbReference type="Pfam" id="PF00380">
    <property type="entry name" value="Ribosomal_S9"/>
    <property type="match status" value="1"/>
</dbReference>
<dbReference type="SUPFAM" id="SSF54211">
    <property type="entry name" value="Ribosomal protein S5 domain 2-like"/>
    <property type="match status" value="1"/>
</dbReference>
<dbReference type="PROSITE" id="PS00360">
    <property type="entry name" value="RIBOSOMAL_S9"/>
    <property type="match status" value="1"/>
</dbReference>